<keyword id="KW-0068">Autocatalytic cleavage</keyword>
<keyword id="KW-0325">Glycoprotein</keyword>
<keyword id="KW-0378">Hydrolase</keyword>
<keyword id="KW-0645">Protease</keyword>
<keyword id="KW-1185">Reference proteome</keyword>
<keyword id="KW-0964">Secreted</keyword>
<keyword id="KW-0720">Serine protease</keyword>
<keyword id="KW-0732">Signal</keyword>
<keyword id="KW-0865">Zymogen</keyword>
<feature type="signal peptide" evidence="3">
    <location>
        <begin position="1"/>
        <end position="24"/>
    </location>
</feature>
<feature type="propeptide" id="PRO_0000435232" description="Activation peptide" evidence="1">
    <location>
        <begin position="25"/>
        <end position="112"/>
    </location>
</feature>
<feature type="chain" id="PRO_5004325407" description="Subtilisin-like protease SBT4.4" evidence="3">
    <location>
        <begin position="113"/>
        <end status="unknown"/>
    </location>
</feature>
<feature type="propeptide" id="PRO_0000435233" description="Activation peptide" evidence="1">
    <location>
        <begin status="unknown"/>
        <end position="741"/>
    </location>
</feature>
<feature type="domain" description="Inhibitor I9" evidence="3">
    <location>
        <begin position="34"/>
        <end position="111"/>
    </location>
</feature>
<feature type="domain" description="Peptidase S8" evidence="5">
    <location>
        <begin position="116"/>
        <end position="589"/>
    </location>
</feature>
<feature type="domain" description="PA" evidence="3">
    <location>
        <begin position="359"/>
        <end position="445"/>
    </location>
</feature>
<feature type="active site" description="Charge relay system" evidence="5">
    <location>
        <position position="144"/>
    </location>
</feature>
<feature type="active site" description="Charge relay system" evidence="5">
    <location>
        <position position="204"/>
    </location>
</feature>
<feature type="active site" description="Charge relay system" evidence="5">
    <location>
        <position position="528"/>
    </location>
</feature>
<feature type="glycosylation site" description="N-linked (GlcNAc...) asparagine" evidence="4">
    <location>
        <position position="175"/>
    </location>
</feature>
<feature type="glycosylation site" description="N-linked (GlcNAc...) asparagine" evidence="4">
    <location>
        <position position="195"/>
    </location>
</feature>
<feature type="glycosylation site" description="N-linked (GlcNAc...) asparagine" evidence="4">
    <location>
        <position position="227"/>
    </location>
</feature>
<feature type="glycosylation site" description="N-linked (GlcNAc...) asparagine" evidence="4">
    <location>
        <position position="357"/>
    </location>
</feature>
<feature type="glycosylation site" description="N-linked (GlcNAc...) asparagine" evidence="4">
    <location>
        <position position="449"/>
    </location>
</feature>
<feature type="glycosylation site" description="N-linked (GlcNAc...) asparagine" evidence="4">
    <location>
        <position position="565"/>
    </location>
</feature>
<feature type="glycosylation site" description="N-linked (GlcNAc...) asparagine" evidence="4">
    <location>
        <position position="610"/>
    </location>
</feature>
<feature type="glycosylation site" description="N-linked (GlcNAc...) asparagine" evidence="4">
    <location>
        <position position="623"/>
    </location>
</feature>
<feature type="glycosylation site" description="N-linked (GlcNAc...) asparagine" evidence="4">
    <location>
        <position position="654"/>
    </location>
</feature>
<dbReference type="EC" id="3.4.21.-" evidence="6"/>
<dbReference type="EMBL" id="AB024027">
    <property type="protein sequence ID" value="BAB10785.1"/>
    <property type="molecule type" value="Genomic_DNA"/>
</dbReference>
<dbReference type="EMBL" id="AB016890">
    <property type="protein sequence ID" value="BAB10785.1"/>
    <property type="status" value="JOINED"/>
    <property type="molecule type" value="Genomic_DNA"/>
</dbReference>
<dbReference type="EMBL" id="CP002688">
    <property type="protein sequence ID" value="AED97142.1"/>
    <property type="molecule type" value="Genomic_DNA"/>
</dbReference>
<dbReference type="EMBL" id="AY099705">
    <property type="protein sequence ID" value="AAM20556.1"/>
    <property type="molecule type" value="mRNA"/>
</dbReference>
<dbReference type="EMBL" id="BT000313">
    <property type="protein sequence ID" value="AAN15632.1"/>
    <property type="molecule type" value="mRNA"/>
</dbReference>
<dbReference type="RefSeq" id="NP_568896.1">
    <property type="nucleotide sequence ID" value="NM_125300.3"/>
</dbReference>
<dbReference type="SMR" id="Q9FGU3"/>
<dbReference type="FunCoup" id="Q9FGU3">
    <property type="interactions" value="5"/>
</dbReference>
<dbReference type="STRING" id="3702.Q9FGU3"/>
<dbReference type="MEROPS" id="S08.A19"/>
<dbReference type="GlyCosmos" id="Q9FGU3">
    <property type="glycosylation" value="9 sites, No reported glycans"/>
</dbReference>
<dbReference type="GlyGen" id="Q9FGU3">
    <property type="glycosylation" value="9 sites"/>
</dbReference>
<dbReference type="iPTMnet" id="Q9FGU3"/>
<dbReference type="PaxDb" id="3702-AT5G59100.1"/>
<dbReference type="EnsemblPlants" id="AT5G59100.1">
    <property type="protein sequence ID" value="AT5G59100.1"/>
    <property type="gene ID" value="AT5G59100"/>
</dbReference>
<dbReference type="GeneID" id="836027"/>
<dbReference type="Gramene" id="AT5G59100.1">
    <property type="protein sequence ID" value="AT5G59100.1"/>
    <property type="gene ID" value="AT5G59100"/>
</dbReference>
<dbReference type="KEGG" id="ath:AT5G59100"/>
<dbReference type="Araport" id="AT5G59100"/>
<dbReference type="TAIR" id="AT5G59100"/>
<dbReference type="eggNOG" id="ENOG502QRA7">
    <property type="taxonomic scope" value="Eukaryota"/>
</dbReference>
<dbReference type="HOGENOM" id="CLU_000625_4_3_1"/>
<dbReference type="InParanoid" id="Q9FGU3"/>
<dbReference type="OMA" id="LNYPTMS"/>
<dbReference type="PhylomeDB" id="Q9FGU3"/>
<dbReference type="PRO" id="PR:Q9FGU3"/>
<dbReference type="Proteomes" id="UP000006548">
    <property type="component" value="Chromosome 5"/>
</dbReference>
<dbReference type="ExpressionAtlas" id="Q9FGU3">
    <property type="expression patterns" value="baseline and differential"/>
</dbReference>
<dbReference type="GO" id="GO:0005576">
    <property type="term" value="C:extracellular region"/>
    <property type="evidence" value="ECO:0007669"/>
    <property type="project" value="UniProtKB-SubCell"/>
</dbReference>
<dbReference type="GO" id="GO:0004252">
    <property type="term" value="F:serine-type endopeptidase activity"/>
    <property type="evidence" value="ECO:0007669"/>
    <property type="project" value="InterPro"/>
</dbReference>
<dbReference type="GO" id="GO:0006508">
    <property type="term" value="P:proteolysis"/>
    <property type="evidence" value="ECO:0007669"/>
    <property type="project" value="UniProtKB-KW"/>
</dbReference>
<dbReference type="CDD" id="cd02120">
    <property type="entry name" value="PA_subtilisin_like"/>
    <property type="match status" value="1"/>
</dbReference>
<dbReference type="CDD" id="cd04852">
    <property type="entry name" value="Peptidases_S8_3"/>
    <property type="match status" value="1"/>
</dbReference>
<dbReference type="FunFam" id="3.30.70.80:FF:000002">
    <property type="entry name" value="Subtilisin-like protease SBT5.3"/>
    <property type="match status" value="1"/>
</dbReference>
<dbReference type="Gene3D" id="2.60.40.2310">
    <property type="match status" value="1"/>
</dbReference>
<dbReference type="Gene3D" id="3.50.30.30">
    <property type="match status" value="1"/>
</dbReference>
<dbReference type="Gene3D" id="3.30.70.80">
    <property type="entry name" value="Peptidase S8 propeptide/proteinase inhibitor I9"/>
    <property type="match status" value="1"/>
</dbReference>
<dbReference type="Gene3D" id="3.40.50.200">
    <property type="entry name" value="Peptidase S8/S53 domain"/>
    <property type="match status" value="1"/>
</dbReference>
<dbReference type="InterPro" id="IPR000209">
    <property type="entry name" value="Peptidase_S8/S53_dom"/>
</dbReference>
<dbReference type="InterPro" id="IPR036852">
    <property type="entry name" value="Peptidase_S8/S53_dom_sf"/>
</dbReference>
<dbReference type="InterPro" id="IPR023828">
    <property type="entry name" value="Peptidase_S8_Ser-AS"/>
</dbReference>
<dbReference type="InterPro" id="IPR015500">
    <property type="entry name" value="Peptidase_S8_subtilisin-rel"/>
</dbReference>
<dbReference type="InterPro" id="IPR034197">
    <property type="entry name" value="Peptidases_S8_3"/>
</dbReference>
<dbReference type="InterPro" id="IPR010259">
    <property type="entry name" value="S8pro/Inhibitor_I9"/>
</dbReference>
<dbReference type="InterPro" id="IPR037045">
    <property type="entry name" value="S8pro/Inhibitor_I9_sf"/>
</dbReference>
<dbReference type="InterPro" id="IPR045051">
    <property type="entry name" value="SBT"/>
</dbReference>
<dbReference type="InterPro" id="IPR041469">
    <property type="entry name" value="Subtilisin-like_FN3"/>
</dbReference>
<dbReference type="PANTHER" id="PTHR10795">
    <property type="entry name" value="PROPROTEIN CONVERTASE SUBTILISIN/KEXIN"/>
    <property type="match status" value="1"/>
</dbReference>
<dbReference type="Pfam" id="PF17766">
    <property type="entry name" value="fn3_6"/>
    <property type="match status" value="1"/>
</dbReference>
<dbReference type="Pfam" id="PF05922">
    <property type="entry name" value="Inhibitor_I9"/>
    <property type="match status" value="1"/>
</dbReference>
<dbReference type="Pfam" id="PF00082">
    <property type="entry name" value="Peptidase_S8"/>
    <property type="match status" value="1"/>
</dbReference>
<dbReference type="PRINTS" id="PR00723">
    <property type="entry name" value="SUBTILISIN"/>
</dbReference>
<dbReference type="SUPFAM" id="SSF52743">
    <property type="entry name" value="Subtilisin-like"/>
    <property type="match status" value="1"/>
</dbReference>
<dbReference type="PROSITE" id="PS51892">
    <property type="entry name" value="SUBTILASE"/>
    <property type="match status" value="1"/>
</dbReference>
<dbReference type="PROSITE" id="PS00138">
    <property type="entry name" value="SUBTILASE_SER"/>
    <property type="match status" value="1"/>
</dbReference>
<organism>
    <name type="scientific">Arabidopsis thaliana</name>
    <name type="common">Mouse-ear cress</name>
    <dbReference type="NCBI Taxonomy" id="3702"/>
    <lineage>
        <taxon>Eukaryota</taxon>
        <taxon>Viridiplantae</taxon>
        <taxon>Streptophyta</taxon>
        <taxon>Embryophyta</taxon>
        <taxon>Tracheophyta</taxon>
        <taxon>Spermatophyta</taxon>
        <taxon>Magnoliopsida</taxon>
        <taxon>eudicotyledons</taxon>
        <taxon>Gunneridae</taxon>
        <taxon>Pentapetalae</taxon>
        <taxon>rosids</taxon>
        <taxon>malvids</taxon>
        <taxon>Brassicales</taxon>
        <taxon>Brassicaceae</taxon>
        <taxon>Camelineae</taxon>
        <taxon>Arabidopsis</taxon>
    </lineage>
</organism>
<gene>
    <name evidence="7" type="primary">SBT4.4</name>
    <name evidence="9" type="ordered locus">At5g59100</name>
    <name evidence="10" type="ORF">K18B18.10</name>
</gene>
<reference key="1">
    <citation type="journal article" date="2000" name="DNA Res.">
        <title>Structural analysis of Arabidopsis thaliana chromosome 5. X. Sequence features of the regions of 3,076,755 bp covered by sixty P1 and TAC clones.</title>
        <authorList>
            <person name="Sato S."/>
            <person name="Nakamura Y."/>
            <person name="Kaneko T."/>
            <person name="Katoh T."/>
            <person name="Asamizu E."/>
            <person name="Kotani H."/>
            <person name="Tabata S."/>
        </authorList>
    </citation>
    <scope>NUCLEOTIDE SEQUENCE [LARGE SCALE GENOMIC DNA]</scope>
    <source>
        <strain>cv. Columbia</strain>
    </source>
</reference>
<reference key="2">
    <citation type="journal article" date="1998" name="DNA Res.">
        <title>Structural analysis of Arabidopsis thaliana chromosome 5. VIII. Sequence features of the regions of 1,081,958 bp covered by seventeen physically assigned P1 and TAC clones.</title>
        <authorList>
            <person name="Asamizu E."/>
            <person name="Sato S."/>
            <person name="Kaneko T."/>
            <person name="Nakamura Y."/>
            <person name="Kotani H."/>
            <person name="Miyajima N."/>
            <person name="Tabata S."/>
        </authorList>
    </citation>
    <scope>NUCLEOTIDE SEQUENCE [LARGE SCALE GENOMIC DNA]</scope>
    <source>
        <strain>cv. Columbia</strain>
    </source>
</reference>
<reference key="3">
    <citation type="journal article" date="2017" name="Plant J.">
        <title>Araport11: a complete reannotation of the Arabidopsis thaliana reference genome.</title>
        <authorList>
            <person name="Cheng C.Y."/>
            <person name="Krishnakumar V."/>
            <person name="Chan A.P."/>
            <person name="Thibaud-Nissen F."/>
            <person name="Schobel S."/>
            <person name="Town C.D."/>
        </authorList>
    </citation>
    <scope>GENOME REANNOTATION</scope>
    <source>
        <strain>cv. Columbia</strain>
    </source>
</reference>
<reference key="4">
    <citation type="journal article" date="2003" name="Science">
        <title>Empirical analysis of transcriptional activity in the Arabidopsis genome.</title>
        <authorList>
            <person name="Yamada K."/>
            <person name="Lim J."/>
            <person name="Dale J.M."/>
            <person name="Chen H."/>
            <person name="Shinn P."/>
            <person name="Palm C.J."/>
            <person name="Southwick A.M."/>
            <person name="Wu H.C."/>
            <person name="Kim C.J."/>
            <person name="Nguyen M."/>
            <person name="Pham P.K."/>
            <person name="Cheuk R.F."/>
            <person name="Karlin-Newmann G."/>
            <person name="Liu S.X."/>
            <person name="Lam B."/>
            <person name="Sakano H."/>
            <person name="Wu T."/>
            <person name="Yu G."/>
            <person name="Miranda M."/>
            <person name="Quach H.L."/>
            <person name="Tripp M."/>
            <person name="Chang C.H."/>
            <person name="Lee J.M."/>
            <person name="Toriumi M.J."/>
            <person name="Chan M.M."/>
            <person name="Tang C.C."/>
            <person name="Onodera C.S."/>
            <person name="Deng J.M."/>
            <person name="Akiyama K."/>
            <person name="Ansari Y."/>
            <person name="Arakawa T."/>
            <person name="Banh J."/>
            <person name="Banno F."/>
            <person name="Bowser L."/>
            <person name="Brooks S.Y."/>
            <person name="Carninci P."/>
            <person name="Chao Q."/>
            <person name="Choy N."/>
            <person name="Enju A."/>
            <person name="Goldsmith A.D."/>
            <person name="Gurjal M."/>
            <person name="Hansen N.F."/>
            <person name="Hayashizaki Y."/>
            <person name="Johnson-Hopson C."/>
            <person name="Hsuan V.W."/>
            <person name="Iida K."/>
            <person name="Karnes M."/>
            <person name="Khan S."/>
            <person name="Koesema E."/>
            <person name="Ishida J."/>
            <person name="Jiang P.X."/>
            <person name="Jones T."/>
            <person name="Kawai J."/>
            <person name="Kamiya A."/>
            <person name="Meyers C."/>
            <person name="Nakajima M."/>
            <person name="Narusaka M."/>
            <person name="Seki M."/>
            <person name="Sakurai T."/>
            <person name="Satou M."/>
            <person name="Tamse R."/>
            <person name="Vaysberg M."/>
            <person name="Wallender E.K."/>
            <person name="Wong C."/>
            <person name="Yamamura Y."/>
            <person name="Yuan S."/>
            <person name="Shinozaki K."/>
            <person name="Davis R.W."/>
            <person name="Theologis A."/>
            <person name="Ecker J.R."/>
        </authorList>
    </citation>
    <scope>NUCLEOTIDE SEQUENCE [LARGE SCALE MRNA]</scope>
    <source>
        <strain>cv. Columbia</strain>
    </source>
</reference>
<reference key="5">
    <citation type="journal article" date="2005" name="PLoS Comput. Biol.">
        <title>Inferring hypotheses on functional relationships of genes: Analysis of the Arabidopsis thaliana subtilase gene family.</title>
        <authorList>
            <person name="Rautengarten C."/>
            <person name="Steinhauser D."/>
            <person name="Bussis D."/>
            <person name="Stintzi A."/>
            <person name="Schaller A."/>
            <person name="Kopka J."/>
            <person name="Altmann T."/>
        </authorList>
    </citation>
    <scope>GENE FAMILY</scope>
    <scope>NOMENCLATURE</scope>
</reference>
<protein>
    <recommendedName>
        <fullName evidence="7">Subtilisin-like protease SBT4.4</fullName>
        <ecNumber evidence="6">3.4.21.-</ecNumber>
    </recommendedName>
    <alternativeName>
        <fullName evidence="7">Subtilase subfamily 4 member 4</fullName>
        <shortName evidence="7">AtSBT4.4</shortName>
    </alternativeName>
</protein>
<name>SBT44_ARATH</name>
<evidence type="ECO:0000250" key="1">
    <source>
        <dbReference type="UniProtKB" id="Q39547"/>
    </source>
</evidence>
<evidence type="ECO:0000250" key="2">
    <source>
        <dbReference type="UniProtKB" id="Q84WS0"/>
    </source>
</evidence>
<evidence type="ECO:0000255" key="3"/>
<evidence type="ECO:0000255" key="4">
    <source>
        <dbReference type="PROSITE-ProRule" id="PRU00498"/>
    </source>
</evidence>
<evidence type="ECO:0000255" key="5">
    <source>
        <dbReference type="PROSITE-ProRule" id="PRU01240"/>
    </source>
</evidence>
<evidence type="ECO:0000255" key="6">
    <source>
        <dbReference type="PROSITE-ProRule" id="PRU10082"/>
    </source>
</evidence>
<evidence type="ECO:0000303" key="7">
    <source>
    </source>
</evidence>
<evidence type="ECO:0000305" key="8"/>
<evidence type="ECO:0000312" key="9">
    <source>
        <dbReference type="Araport" id="AT5G59100"/>
    </source>
</evidence>
<evidence type="ECO:0000312" key="10">
    <source>
        <dbReference type="EMBL" id="BAB10785.1"/>
    </source>
</evidence>
<proteinExistence type="evidence at transcript level"/>
<sequence>MAKGTTFIFLFSSLLVLSLSSVSADKDDHGDQQVYIVYLGSLPSREEYTPMSDHMSILQEITGESLIENRLVRSYKKSFNGFAARLTESERKRLAGMERVVSVFPSRKLKLQTTSSWNFMGLKEGIKTKRTRSIESDTIIGVIDSGIYPESDSFSDQGFGPPPKKWKGTCAGGKNFTCNNKVIGARDYTAKSKANQTARDYSGHGTHTASIAAGNAVANSNFYGLGNGTARGGVPAARIAVYKVCDNEGCDGEAMMSAFDDAIADGVDVISISIVLDNIPPFEEDPIAIGAFHAMAVGVLTVNAAGNNGPKISTVTSTAPWVFSVAASVTNRAFMAKVVLGDGKILIGRSVNTYDMNGTNYPLVYGKSAALSTCSVDKARLCEPKCLDGKLVKGKIVLCDSTKGLIEAQKLGAVGSIVKNPEPDRAFIRSFPVSFLSNDDYKSLVSYMNSTKNPKATVLKSEEISNQRAPLVASFSSRGPSSIVSDILKPDITAPGVEILAAYSPDSSPTESEFDTRRVKYSVLSGTSMACPHVAGVAAYVKTFHPQWSPSMIQSAIMTTAWPMNASGSGFVSTEFAYGSGHVDPIDAINPGLVYELTKADHINFLCGLNYTSDHLRIISGDNSTCTKEISKTLPRNLNYPTMSAKVSGTKPFNITFQRTVTNVGMQKSTYNAKVVKFPGSKLSIKVSPRVLSMKSMNEKQSFMVTVSSDSIGTKQPVSANLIWSDGTHNVRSPIIVYAMS</sequence>
<comment type="subcellular location">
    <subcellularLocation>
        <location evidence="2">Secreted</location>
    </subcellularLocation>
</comment>
<comment type="PTM">
    <text evidence="1">The C-terminal propeptide is autocleaved.</text>
</comment>
<comment type="similarity">
    <text evidence="8">Belongs to the peptidase S8 family.</text>
</comment>
<accession>Q9FGU3</accession>